<reference key="1">
    <citation type="journal article" date="2005" name="Arch. Microbiol.">
        <title>The genome sequence of an anaerobic aromatic-degrading denitrifying bacterium, strain EbN1.</title>
        <authorList>
            <person name="Rabus R."/>
            <person name="Kube M."/>
            <person name="Heider J."/>
            <person name="Beck A."/>
            <person name="Heitmann K."/>
            <person name="Widdel F."/>
            <person name="Reinhardt R."/>
        </authorList>
    </citation>
    <scope>NUCLEOTIDE SEQUENCE [LARGE SCALE GENOMIC DNA]</scope>
    <source>
        <strain>DSM 19018 / LMG 30748 / EbN1</strain>
    </source>
</reference>
<proteinExistence type="inferred from homology"/>
<comment type="function">
    <text evidence="1">Prevents the cell division inhibition by proteins MinC and MinD at internal division sites while permitting inhibition at polar sites. This ensures cell division at the proper site by restricting the formation of a division septum at the midpoint of the long axis of the cell.</text>
</comment>
<comment type="similarity">
    <text evidence="1">Belongs to the MinE family.</text>
</comment>
<feature type="chain" id="PRO_0000298072" description="Cell division topological specificity factor">
    <location>
        <begin position="1"/>
        <end position="88"/>
    </location>
</feature>
<accession>Q5NY33</accession>
<gene>
    <name evidence="1" type="primary">minE</name>
    <name type="ordered locus">AZOSEA39060</name>
    <name type="ORF">ebA6839</name>
</gene>
<sequence>MTFLARLFGEKKKTAEIAKNRLSLLIAHERGDGVPKVDFLPALQRELIEVISKYVPVNSDDIKVHLDKQNNYEVLEVNIVLPEQNQGR</sequence>
<protein>
    <recommendedName>
        <fullName evidence="1">Cell division topological specificity factor</fullName>
    </recommendedName>
</protein>
<dbReference type="EMBL" id="CR555306">
    <property type="protein sequence ID" value="CAI10031.1"/>
    <property type="molecule type" value="Genomic_DNA"/>
</dbReference>
<dbReference type="RefSeq" id="WP_011239676.1">
    <property type="nucleotide sequence ID" value="NC_006513.1"/>
</dbReference>
<dbReference type="SMR" id="Q5NY33"/>
<dbReference type="STRING" id="76114.ebA6839"/>
<dbReference type="KEGG" id="eba:ebA6839"/>
<dbReference type="eggNOG" id="COG0851">
    <property type="taxonomic scope" value="Bacteria"/>
</dbReference>
<dbReference type="HOGENOM" id="CLU_137929_2_1_4"/>
<dbReference type="OrthoDB" id="9802655at2"/>
<dbReference type="Proteomes" id="UP000006552">
    <property type="component" value="Chromosome"/>
</dbReference>
<dbReference type="GO" id="GO:0051301">
    <property type="term" value="P:cell division"/>
    <property type="evidence" value="ECO:0007669"/>
    <property type="project" value="UniProtKB-KW"/>
</dbReference>
<dbReference type="GO" id="GO:0032955">
    <property type="term" value="P:regulation of division septum assembly"/>
    <property type="evidence" value="ECO:0007669"/>
    <property type="project" value="InterPro"/>
</dbReference>
<dbReference type="Gene3D" id="3.30.1070.10">
    <property type="entry name" value="Cell division topological specificity factor MinE"/>
    <property type="match status" value="1"/>
</dbReference>
<dbReference type="HAMAP" id="MF_00262">
    <property type="entry name" value="MinE"/>
    <property type="match status" value="1"/>
</dbReference>
<dbReference type="InterPro" id="IPR005527">
    <property type="entry name" value="MinE"/>
</dbReference>
<dbReference type="InterPro" id="IPR036707">
    <property type="entry name" value="MinE_sf"/>
</dbReference>
<dbReference type="NCBIfam" id="TIGR01215">
    <property type="entry name" value="minE"/>
    <property type="match status" value="1"/>
</dbReference>
<dbReference type="NCBIfam" id="NF001422">
    <property type="entry name" value="PRK00296.1"/>
    <property type="match status" value="1"/>
</dbReference>
<dbReference type="NCBIfam" id="NF010595">
    <property type="entry name" value="PRK13989.1"/>
    <property type="match status" value="1"/>
</dbReference>
<dbReference type="Pfam" id="PF03776">
    <property type="entry name" value="MinE"/>
    <property type="match status" value="1"/>
</dbReference>
<dbReference type="SUPFAM" id="SSF55229">
    <property type="entry name" value="Cell division protein MinE topological specificity domain"/>
    <property type="match status" value="1"/>
</dbReference>
<organism>
    <name type="scientific">Aromatoleum aromaticum (strain DSM 19018 / LMG 30748 / EbN1)</name>
    <name type="common">Azoarcus sp. (strain EbN1)</name>
    <dbReference type="NCBI Taxonomy" id="76114"/>
    <lineage>
        <taxon>Bacteria</taxon>
        <taxon>Pseudomonadati</taxon>
        <taxon>Pseudomonadota</taxon>
        <taxon>Betaproteobacteria</taxon>
        <taxon>Rhodocyclales</taxon>
        <taxon>Rhodocyclaceae</taxon>
        <taxon>Aromatoleum</taxon>
    </lineage>
</organism>
<keyword id="KW-0131">Cell cycle</keyword>
<keyword id="KW-0132">Cell division</keyword>
<keyword id="KW-1185">Reference proteome</keyword>
<name>MINE_AROAE</name>
<evidence type="ECO:0000255" key="1">
    <source>
        <dbReference type="HAMAP-Rule" id="MF_00262"/>
    </source>
</evidence>